<evidence type="ECO:0000255" key="1">
    <source>
        <dbReference type="HAMAP-Rule" id="MF_01962"/>
    </source>
</evidence>
<name>ADE_AGRFC</name>
<gene>
    <name type="ordered locus">Atu0136</name>
    <name type="ORF">AGR_C_218</name>
</gene>
<organism>
    <name type="scientific">Agrobacterium fabrum (strain C58 / ATCC 33970)</name>
    <name type="common">Agrobacterium tumefaciens (strain C58)</name>
    <dbReference type="NCBI Taxonomy" id="176299"/>
    <lineage>
        <taxon>Bacteria</taxon>
        <taxon>Pseudomonadati</taxon>
        <taxon>Pseudomonadota</taxon>
        <taxon>Alphaproteobacteria</taxon>
        <taxon>Hyphomicrobiales</taxon>
        <taxon>Rhizobiaceae</taxon>
        <taxon>Rhizobium/Agrobacterium group</taxon>
        <taxon>Agrobacterium</taxon>
        <taxon>Agrobacterium tumefaciens complex</taxon>
    </lineage>
</organism>
<proteinExistence type="inferred from homology"/>
<protein>
    <recommendedName>
        <fullName evidence="1">Adenine deaminase</fullName>
        <shortName evidence="1">ADE</shortName>
        <ecNumber evidence="1">3.5.4.2</ecNumber>
    </recommendedName>
    <alternativeName>
        <fullName evidence="1">Adenine aminohydrolase</fullName>
        <shortName evidence="1">AAH</shortName>
    </alternativeName>
</protein>
<reference key="1">
    <citation type="journal article" date="2001" name="Science">
        <title>The genome of the natural genetic engineer Agrobacterium tumefaciens C58.</title>
        <authorList>
            <person name="Wood D.W."/>
            <person name="Setubal J.C."/>
            <person name="Kaul R."/>
            <person name="Monks D.E."/>
            <person name="Kitajima J.P."/>
            <person name="Okura V.K."/>
            <person name="Zhou Y."/>
            <person name="Chen L."/>
            <person name="Wood G.E."/>
            <person name="Almeida N.F. Jr."/>
            <person name="Woo L."/>
            <person name="Chen Y."/>
            <person name="Paulsen I.T."/>
            <person name="Eisen J.A."/>
            <person name="Karp P.D."/>
            <person name="Bovee D. Sr."/>
            <person name="Chapman P."/>
            <person name="Clendenning J."/>
            <person name="Deatherage G."/>
            <person name="Gillet W."/>
            <person name="Grant C."/>
            <person name="Kutyavin T."/>
            <person name="Levy R."/>
            <person name="Li M.-J."/>
            <person name="McClelland E."/>
            <person name="Palmieri A."/>
            <person name="Raymond C."/>
            <person name="Rouse G."/>
            <person name="Saenphimmachak C."/>
            <person name="Wu Z."/>
            <person name="Romero P."/>
            <person name="Gordon D."/>
            <person name="Zhang S."/>
            <person name="Yoo H."/>
            <person name="Tao Y."/>
            <person name="Biddle P."/>
            <person name="Jung M."/>
            <person name="Krespan W."/>
            <person name="Perry M."/>
            <person name="Gordon-Kamm B."/>
            <person name="Liao L."/>
            <person name="Kim S."/>
            <person name="Hendrick C."/>
            <person name="Zhao Z.-Y."/>
            <person name="Dolan M."/>
            <person name="Chumley F."/>
            <person name="Tingey S.V."/>
            <person name="Tomb J.-F."/>
            <person name="Gordon M.P."/>
            <person name="Olson M.V."/>
            <person name="Nester E.W."/>
        </authorList>
    </citation>
    <scope>NUCLEOTIDE SEQUENCE [LARGE SCALE GENOMIC DNA]</scope>
    <source>
        <strain>C58 / ATCC 33970</strain>
    </source>
</reference>
<reference key="2">
    <citation type="journal article" date="2001" name="Science">
        <title>Genome sequence of the plant pathogen and biotechnology agent Agrobacterium tumefaciens C58.</title>
        <authorList>
            <person name="Goodner B."/>
            <person name="Hinkle G."/>
            <person name="Gattung S."/>
            <person name="Miller N."/>
            <person name="Blanchard M."/>
            <person name="Qurollo B."/>
            <person name="Goldman B.S."/>
            <person name="Cao Y."/>
            <person name="Askenazi M."/>
            <person name="Halling C."/>
            <person name="Mullin L."/>
            <person name="Houmiel K."/>
            <person name="Gordon J."/>
            <person name="Vaudin M."/>
            <person name="Iartchouk O."/>
            <person name="Epp A."/>
            <person name="Liu F."/>
            <person name="Wollam C."/>
            <person name="Allinger M."/>
            <person name="Doughty D."/>
            <person name="Scott C."/>
            <person name="Lappas C."/>
            <person name="Markelz B."/>
            <person name="Flanagan C."/>
            <person name="Crowell C."/>
            <person name="Gurson J."/>
            <person name="Lomo C."/>
            <person name="Sear C."/>
            <person name="Strub G."/>
            <person name="Cielo C."/>
            <person name="Slater S."/>
        </authorList>
    </citation>
    <scope>NUCLEOTIDE SEQUENCE [LARGE SCALE GENOMIC DNA]</scope>
    <source>
        <strain>C58 / ATCC 33970</strain>
    </source>
</reference>
<accession>Q8UJ05</accession>
<sequence>MTSHLLKAEIHCHLEGAAPPALVVKQAEKYGIDTSGFLRDGQYVWSDFAEFIQCYDAVAQVFKSDEDYAVLTETYLTELAEANTIYSELIISPDHGDRIGLGADAYLAGVAEGIRIAKEKTGIETRIIVTGERHFGPERVIAAAEYAARIRHPLVTGFNMAGEERMGRVADYARAFDIARDAGLGLTIHAGEVCGPESVADALDLVKPSRIGHGVRAIEDAALISRLVETGTVLEVCPGSNIALSVYPDFASHPLKALSDAGVRVCISSDDPPFFFTSLAREYALAADAFGFNDAEINRMTRTALECAFVDEATRERLLARLGDA</sequence>
<feature type="chain" id="PRO_0000194361" description="Adenine deaminase">
    <location>
        <begin position="1"/>
        <end position="325"/>
    </location>
</feature>
<feature type="active site" description="Proton donor" evidence="1">
    <location>
        <position position="192"/>
    </location>
</feature>
<feature type="binding site" evidence="1">
    <location>
        <position position="11"/>
    </location>
    <ligand>
        <name>Zn(2+)</name>
        <dbReference type="ChEBI" id="CHEBI:29105"/>
        <note>catalytic</note>
    </ligand>
</feature>
<feature type="binding site" evidence="1">
    <location>
        <position position="13"/>
    </location>
    <ligand>
        <name>Zn(2+)</name>
        <dbReference type="ChEBI" id="CHEBI:29105"/>
        <note>catalytic</note>
    </ligand>
</feature>
<feature type="binding site" evidence="1">
    <location>
        <position position="189"/>
    </location>
    <ligand>
        <name>Zn(2+)</name>
        <dbReference type="ChEBI" id="CHEBI:29105"/>
        <note>catalytic</note>
    </ligand>
</feature>
<feature type="binding site" evidence="1">
    <location>
        <position position="270"/>
    </location>
    <ligand>
        <name>Zn(2+)</name>
        <dbReference type="ChEBI" id="CHEBI:29105"/>
        <note>catalytic</note>
    </ligand>
</feature>
<feature type="binding site" evidence="1">
    <location>
        <position position="271"/>
    </location>
    <ligand>
        <name>substrate</name>
    </ligand>
</feature>
<feature type="site" description="Important for catalytic activity" evidence="1">
    <location>
        <position position="213"/>
    </location>
</feature>
<dbReference type="EC" id="3.5.4.2" evidence="1"/>
<dbReference type="EMBL" id="AE007869">
    <property type="protein sequence ID" value="AAK85957.1"/>
    <property type="molecule type" value="Genomic_DNA"/>
</dbReference>
<dbReference type="PIR" id="AB2593">
    <property type="entry name" value="AB2593"/>
</dbReference>
<dbReference type="PIR" id="D97375">
    <property type="entry name" value="D97375"/>
</dbReference>
<dbReference type="RefSeq" id="NP_353172.1">
    <property type="nucleotide sequence ID" value="NC_003062.2"/>
</dbReference>
<dbReference type="RefSeq" id="WP_010970674.1">
    <property type="nucleotide sequence ID" value="NC_003062.2"/>
</dbReference>
<dbReference type="SMR" id="Q8UJ05"/>
<dbReference type="STRING" id="176299.Atu0136"/>
<dbReference type="EnsemblBacteria" id="AAK85957">
    <property type="protein sequence ID" value="AAK85957"/>
    <property type="gene ID" value="Atu0136"/>
</dbReference>
<dbReference type="GeneID" id="1132174"/>
<dbReference type="KEGG" id="atu:Atu0136"/>
<dbReference type="PATRIC" id="fig|176299.10.peg.127"/>
<dbReference type="eggNOG" id="COG1816">
    <property type="taxonomic scope" value="Bacteria"/>
</dbReference>
<dbReference type="HOGENOM" id="CLU_039228_7_1_5"/>
<dbReference type="OrthoDB" id="105475at2"/>
<dbReference type="PhylomeDB" id="Q8UJ05"/>
<dbReference type="BioCyc" id="AGRO:ATU0136-MONOMER"/>
<dbReference type="Proteomes" id="UP000000813">
    <property type="component" value="Chromosome circular"/>
</dbReference>
<dbReference type="GO" id="GO:0000034">
    <property type="term" value="F:adenine deaminase activity"/>
    <property type="evidence" value="ECO:0007669"/>
    <property type="project" value="UniProtKB-UniRule"/>
</dbReference>
<dbReference type="GO" id="GO:0008270">
    <property type="term" value="F:zinc ion binding"/>
    <property type="evidence" value="ECO:0007669"/>
    <property type="project" value="UniProtKB-UniRule"/>
</dbReference>
<dbReference type="GO" id="GO:0006146">
    <property type="term" value="P:adenine catabolic process"/>
    <property type="evidence" value="ECO:0007669"/>
    <property type="project" value="UniProtKB-UniRule"/>
</dbReference>
<dbReference type="GO" id="GO:0043103">
    <property type="term" value="P:hypoxanthine salvage"/>
    <property type="evidence" value="ECO:0007669"/>
    <property type="project" value="UniProtKB-UniRule"/>
</dbReference>
<dbReference type="GO" id="GO:0009117">
    <property type="term" value="P:nucleotide metabolic process"/>
    <property type="evidence" value="ECO:0007669"/>
    <property type="project" value="UniProtKB-KW"/>
</dbReference>
<dbReference type="CDD" id="cd01320">
    <property type="entry name" value="ADA"/>
    <property type="match status" value="1"/>
</dbReference>
<dbReference type="Gene3D" id="3.20.20.140">
    <property type="entry name" value="Metal-dependent hydrolases"/>
    <property type="match status" value="1"/>
</dbReference>
<dbReference type="HAMAP" id="MF_01962">
    <property type="entry name" value="Adenine_deaminase"/>
    <property type="match status" value="1"/>
</dbReference>
<dbReference type="InterPro" id="IPR001365">
    <property type="entry name" value="A_deaminase_dom"/>
</dbReference>
<dbReference type="InterPro" id="IPR028892">
    <property type="entry name" value="ADE"/>
</dbReference>
<dbReference type="InterPro" id="IPR006330">
    <property type="entry name" value="Ado/ade_deaminase"/>
</dbReference>
<dbReference type="InterPro" id="IPR032466">
    <property type="entry name" value="Metal_Hydrolase"/>
</dbReference>
<dbReference type="NCBIfam" id="TIGR01430">
    <property type="entry name" value="aden_deam"/>
    <property type="match status" value="1"/>
</dbReference>
<dbReference type="NCBIfam" id="NF006848">
    <property type="entry name" value="PRK09358.1-3"/>
    <property type="match status" value="1"/>
</dbReference>
<dbReference type="PANTHER" id="PTHR43114">
    <property type="entry name" value="ADENINE DEAMINASE"/>
    <property type="match status" value="1"/>
</dbReference>
<dbReference type="PANTHER" id="PTHR43114:SF6">
    <property type="entry name" value="ADENINE DEAMINASE"/>
    <property type="match status" value="1"/>
</dbReference>
<dbReference type="Pfam" id="PF00962">
    <property type="entry name" value="A_deaminase"/>
    <property type="match status" value="1"/>
</dbReference>
<dbReference type="SUPFAM" id="SSF51556">
    <property type="entry name" value="Metallo-dependent hydrolases"/>
    <property type="match status" value="1"/>
</dbReference>
<keyword id="KW-0378">Hydrolase</keyword>
<keyword id="KW-0479">Metal-binding</keyword>
<keyword id="KW-0546">Nucleotide metabolism</keyword>
<keyword id="KW-1185">Reference proteome</keyword>
<keyword id="KW-0862">Zinc</keyword>
<comment type="function">
    <text evidence="1">Catalyzes the hydrolytic deamination of adenine to hypoxanthine. Plays an important role in the purine salvage pathway and in nitrogen catabolism.</text>
</comment>
<comment type="catalytic activity">
    <reaction evidence="1">
        <text>adenine + H2O + H(+) = hypoxanthine + NH4(+)</text>
        <dbReference type="Rhea" id="RHEA:23688"/>
        <dbReference type="ChEBI" id="CHEBI:15377"/>
        <dbReference type="ChEBI" id="CHEBI:15378"/>
        <dbReference type="ChEBI" id="CHEBI:16708"/>
        <dbReference type="ChEBI" id="CHEBI:17368"/>
        <dbReference type="ChEBI" id="CHEBI:28938"/>
        <dbReference type="EC" id="3.5.4.2"/>
    </reaction>
</comment>
<comment type="cofactor">
    <cofactor evidence="1">
        <name>Zn(2+)</name>
        <dbReference type="ChEBI" id="CHEBI:29105"/>
    </cofactor>
    <text evidence="1">Binds 1 zinc ion per subunit.</text>
</comment>
<comment type="similarity">
    <text evidence="1">Belongs to the metallo-dependent hydrolases superfamily. Adenosine and AMP deaminases family. Adenine deaminase type 2 subfamily.</text>
</comment>